<name>DNAJ_MARSD</name>
<protein>
    <recommendedName>
        <fullName evidence="1">Chaperone protein DnaJ</fullName>
    </recommendedName>
</protein>
<keyword id="KW-0143">Chaperone</keyword>
<keyword id="KW-0963">Cytoplasm</keyword>
<keyword id="KW-0235">DNA replication</keyword>
<keyword id="KW-0479">Metal-binding</keyword>
<keyword id="KW-1185">Reference proteome</keyword>
<keyword id="KW-0677">Repeat</keyword>
<keyword id="KW-0346">Stress response</keyword>
<keyword id="KW-0862">Zinc</keyword>
<keyword id="KW-0863">Zinc-finger</keyword>
<accession>C6BYN5</accession>
<evidence type="ECO:0000255" key="1">
    <source>
        <dbReference type="HAMAP-Rule" id="MF_01152"/>
    </source>
</evidence>
<sequence>MSKRCYYEVLEVSREAQEGEIKRAYRKKAMEFHPDRNPGNAEAEEKFKEAAEAYDVLRDPEKRSRYDRFGHQGMNGMNGGFGGFQSSEDIFGAFGDIFGDIFGFGGGGRGANRMQAGSDLRYNLTVSFRDAAKGTEVELNIPVTDTCDTCEGSGSAPGTSPETCSHCGGRGAVEQNQGFFRISVPCPACNGRGKVITDPCSECRGAGYVRKQKDLNVRIPAGVDNGSRLRLRGEGEAGMNGGPHGDLYVVITVEPDKVFKRQGQDLVLSTEITFVQAALGYKLEVPTLDEPIEMDIPKGTQSGEVFQLRGLGLPYLGSSHKGDLLVEVKVKTPTGLNSRQEELLREFEALDEEKPMKKVKKLFKKAKDKVMGE</sequence>
<dbReference type="EMBL" id="CP001649">
    <property type="protein sequence ID" value="ACS80642.1"/>
    <property type="molecule type" value="Genomic_DNA"/>
</dbReference>
<dbReference type="RefSeq" id="WP_015852458.1">
    <property type="nucleotide sequence ID" value="NC_012881.1"/>
</dbReference>
<dbReference type="SMR" id="C6BYN5"/>
<dbReference type="STRING" id="526222.Desal_2587"/>
<dbReference type="KEGG" id="dsa:Desal_2587"/>
<dbReference type="eggNOG" id="COG0484">
    <property type="taxonomic scope" value="Bacteria"/>
</dbReference>
<dbReference type="HOGENOM" id="CLU_017633_0_7_7"/>
<dbReference type="OrthoDB" id="9779889at2"/>
<dbReference type="Proteomes" id="UP000002601">
    <property type="component" value="Chromosome"/>
</dbReference>
<dbReference type="GO" id="GO:0005737">
    <property type="term" value="C:cytoplasm"/>
    <property type="evidence" value="ECO:0007669"/>
    <property type="project" value="UniProtKB-SubCell"/>
</dbReference>
<dbReference type="GO" id="GO:0005524">
    <property type="term" value="F:ATP binding"/>
    <property type="evidence" value="ECO:0007669"/>
    <property type="project" value="InterPro"/>
</dbReference>
<dbReference type="GO" id="GO:0031072">
    <property type="term" value="F:heat shock protein binding"/>
    <property type="evidence" value="ECO:0007669"/>
    <property type="project" value="InterPro"/>
</dbReference>
<dbReference type="GO" id="GO:0051082">
    <property type="term" value="F:unfolded protein binding"/>
    <property type="evidence" value="ECO:0007669"/>
    <property type="project" value="UniProtKB-UniRule"/>
</dbReference>
<dbReference type="GO" id="GO:0008270">
    <property type="term" value="F:zinc ion binding"/>
    <property type="evidence" value="ECO:0007669"/>
    <property type="project" value="UniProtKB-UniRule"/>
</dbReference>
<dbReference type="GO" id="GO:0051085">
    <property type="term" value="P:chaperone cofactor-dependent protein refolding"/>
    <property type="evidence" value="ECO:0007669"/>
    <property type="project" value="TreeGrafter"/>
</dbReference>
<dbReference type="GO" id="GO:0006260">
    <property type="term" value="P:DNA replication"/>
    <property type="evidence" value="ECO:0007669"/>
    <property type="project" value="UniProtKB-KW"/>
</dbReference>
<dbReference type="GO" id="GO:0042026">
    <property type="term" value="P:protein refolding"/>
    <property type="evidence" value="ECO:0007669"/>
    <property type="project" value="TreeGrafter"/>
</dbReference>
<dbReference type="GO" id="GO:0009408">
    <property type="term" value="P:response to heat"/>
    <property type="evidence" value="ECO:0007669"/>
    <property type="project" value="InterPro"/>
</dbReference>
<dbReference type="CDD" id="cd06257">
    <property type="entry name" value="DnaJ"/>
    <property type="match status" value="1"/>
</dbReference>
<dbReference type="CDD" id="cd10747">
    <property type="entry name" value="DnaJ_C"/>
    <property type="match status" value="1"/>
</dbReference>
<dbReference type="CDD" id="cd10719">
    <property type="entry name" value="DnaJ_zf"/>
    <property type="match status" value="1"/>
</dbReference>
<dbReference type="FunFam" id="1.10.287.110:FF:000034">
    <property type="entry name" value="Chaperone protein DnaJ"/>
    <property type="match status" value="1"/>
</dbReference>
<dbReference type="FunFam" id="2.60.260.20:FF:000005">
    <property type="entry name" value="Chaperone protein dnaJ 1, mitochondrial"/>
    <property type="match status" value="1"/>
</dbReference>
<dbReference type="FunFam" id="2.10.230.10:FF:000002">
    <property type="entry name" value="Molecular chaperone DnaJ"/>
    <property type="match status" value="1"/>
</dbReference>
<dbReference type="Gene3D" id="6.20.20.10">
    <property type="match status" value="2"/>
</dbReference>
<dbReference type="Gene3D" id="1.10.287.110">
    <property type="entry name" value="DnaJ domain"/>
    <property type="match status" value="1"/>
</dbReference>
<dbReference type="Gene3D" id="2.60.260.20">
    <property type="entry name" value="Urease metallochaperone UreE, N-terminal domain"/>
    <property type="match status" value="2"/>
</dbReference>
<dbReference type="HAMAP" id="MF_01152">
    <property type="entry name" value="DnaJ"/>
    <property type="match status" value="1"/>
</dbReference>
<dbReference type="InterPro" id="IPR012724">
    <property type="entry name" value="DnaJ"/>
</dbReference>
<dbReference type="InterPro" id="IPR002939">
    <property type="entry name" value="DnaJ_C"/>
</dbReference>
<dbReference type="InterPro" id="IPR001623">
    <property type="entry name" value="DnaJ_domain"/>
</dbReference>
<dbReference type="InterPro" id="IPR018253">
    <property type="entry name" value="DnaJ_domain_CS"/>
</dbReference>
<dbReference type="InterPro" id="IPR008971">
    <property type="entry name" value="HSP40/DnaJ_pept-bd"/>
</dbReference>
<dbReference type="InterPro" id="IPR001305">
    <property type="entry name" value="HSP_DnaJ_Cys-rich_dom"/>
</dbReference>
<dbReference type="InterPro" id="IPR036410">
    <property type="entry name" value="HSP_DnaJ_Cys-rich_dom_sf"/>
</dbReference>
<dbReference type="InterPro" id="IPR036869">
    <property type="entry name" value="J_dom_sf"/>
</dbReference>
<dbReference type="NCBIfam" id="TIGR02349">
    <property type="entry name" value="DnaJ_bact"/>
    <property type="match status" value="1"/>
</dbReference>
<dbReference type="NCBIfam" id="NF008035">
    <property type="entry name" value="PRK10767.1"/>
    <property type="match status" value="1"/>
</dbReference>
<dbReference type="NCBIfam" id="NF010894">
    <property type="entry name" value="PRK14301.1"/>
    <property type="match status" value="1"/>
</dbReference>
<dbReference type="PANTHER" id="PTHR43096:SF48">
    <property type="entry name" value="CHAPERONE PROTEIN DNAJ"/>
    <property type="match status" value="1"/>
</dbReference>
<dbReference type="PANTHER" id="PTHR43096">
    <property type="entry name" value="DNAJ HOMOLOG 1, MITOCHONDRIAL-RELATED"/>
    <property type="match status" value="1"/>
</dbReference>
<dbReference type="Pfam" id="PF00226">
    <property type="entry name" value="DnaJ"/>
    <property type="match status" value="1"/>
</dbReference>
<dbReference type="Pfam" id="PF01556">
    <property type="entry name" value="DnaJ_C"/>
    <property type="match status" value="1"/>
</dbReference>
<dbReference type="Pfam" id="PF00684">
    <property type="entry name" value="DnaJ_CXXCXGXG"/>
    <property type="match status" value="1"/>
</dbReference>
<dbReference type="PRINTS" id="PR00625">
    <property type="entry name" value="JDOMAIN"/>
</dbReference>
<dbReference type="SMART" id="SM00271">
    <property type="entry name" value="DnaJ"/>
    <property type="match status" value="1"/>
</dbReference>
<dbReference type="SUPFAM" id="SSF46565">
    <property type="entry name" value="Chaperone J-domain"/>
    <property type="match status" value="1"/>
</dbReference>
<dbReference type="SUPFAM" id="SSF57938">
    <property type="entry name" value="DnaJ/Hsp40 cysteine-rich domain"/>
    <property type="match status" value="1"/>
</dbReference>
<dbReference type="SUPFAM" id="SSF49493">
    <property type="entry name" value="HSP40/DnaJ peptide-binding domain"/>
    <property type="match status" value="2"/>
</dbReference>
<dbReference type="PROSITE" id="PS00636">
    <property type="entry name" value="DNAJ_1"/>
    <property type="match status" value="1"/>
</dbReference>
<dbReference type="PROSITE" id="PS50076">
    <property type="entry name" value="DNAJ_2"/>
    <property type="match status" value="1"/>
</dbReference>
<dbReference type="PROSITE" id="PS51188">
    <property type="entry name" value="ZF_CR"/>
    <property type="match status" value="1"/>
</dbReference>
<proteinExistence type="inferred from homology"/>
<gene>
    <name evidence="1" type="primary">dnaJ</name>
    <name type="ordered locus">Desal_2587</name>
</gene>
<feature type="chain" id="PRO_1000213679" description="Chaperone protein DnaJ">
    <location>
        <begin position="1"/>
        <end position="373"/>
    </location>
</feature>
<feature type="domain" description="J" evidence="1">
    <location>
        <begin position="5"/>
        <end position="70"/>
    </location>
</feature>
<feature type="repeat" description="CXXCXGXG motif">
    <location>
        <begin position="147"/>
        <end position="154"/>
    </location>
</feature>
<feature type="repeat" description="CXXCXGXG motif">
    <location>
        <begin position="164"/>
        <end position="171"/>
    </location>
</feature>
<feature type="repeat" description="CXXCXGXG motif">
    <location>
        <begin position="186"/>
        <end position="193"/>
    </location>
</feature>
<feature type="repeat" description="CXXCXGXG motif">
    <location>
        <begin position="200"/>
        <end position="207"/>
    </location>
</feature>
<feature type="zinc finger region" description="CR-type" evidence="1">
    <location>
        <begin position="134"/>
        <end position="212"/>
    </location>
</feature>
<feature type="binding site" evidence="1">
    <location>
        <position position="147"/>
    </location>
    <ligand>
        <name>Zn(2+)</name>
        <dbReference type="ChEBI" id="CHEBI:29105"/>
        <label>1</label>
    </ligand>
</feature>
<feature type="binding site" evidence="1">
    <location>
        <position position="150"/>
    </location>
    <ligand>
        <name>Zn(2+)</name>
        <dbReference type="ChEBI" id="CHEBI:29105"/>
        <label>1</label>
    </ligand>
</feature>
<feature type="binding site" evidence="1">
    <location>
        <position position="164"/>
    </location>
    <ligand>
        <name>Zn(2+)</name>
        <dbReference type="ChEBI" id="CHEBI:29105"/>
        <label>2</label>
    </ligand>
</feature>
<feature type="binding site" evidence="1">
    <location>
        <position position="167"/>
    </location>
    <ligand>
        <name>Zn(2+)</name>
        <dbReference type="ChEBI" id="CHEBI:29105"/>
        <label>2</label>
    </ligand>
</feature>
<feature type="binding site" evidence="1">
    <location>
        <position position="186"/>
    </location>
    <ligand>
        <name>Zn(2+)</name>
        <dbReference type="ChEBI" id="CHEBI:29105"/>
        <label>2</label>
    </ligand>
</feature>
<feature type="binding site" evidence="1">
    <location>
        <position position="189"/>
    </location>
    <ligand>
        <name>Zn(2+)</name>
        <dbReference type="ChEBI" id="CHEBI:29105"/>
        <label>2</label>
    </ligand>
</feature>
<feature type="binding site" evidence="1">
    <location>
        <position position="200"/>
    </location>
    <ligand>
        <name>Zn(2+)</name>
        <dbReference type="ChEBI" id="CHEBI:29105"/>
        <label>1</label>
    </ligand>
</feature>
<feature type="binding site" evidence="1">
    <location>
        <position position="203"/>
    </location>
    <ligand>
        <name>Zn(2+)</name>
        <dbReference type="ChEBI" id="CHEBI:29105"/>
        <label>1</label>
    </ligand>
</feature>
<comment type="function">
    <text evidence="1">Participates actively in the response to hyperosmotic and heat shock by preventing the aggregation of stress-denatured proteins and by disaggregating proteins, also in an autonomous, DnaK-independent fashion. Unfolded proteins bind initially to DnaJ; upon interaction with the DnaJ-bound protein, DnaK hydrolyzes its bound ATP, resulting in the formation of a stable complex. GrpE releases ADP from DnaK; ATP binding to DnaK triggers the release of the substrate protein, thus completing the reaction cycle. Several rounds of ATP-dependent interactions between DnaJ, DnaK and GrpE are required for fully efficient folding. Also involved, together with DnaK and GrpE, in the DNA replication of plasmids through activation of initiation proteins.</text>
</comment>
<comment type="cofactor">
    <cofactor evidence="1">
        <name>Zn(2+)</name>
        <dbReference type="ChEBI" id="CHEBI:29105"/>
    </cofactor>
    <text evidence="1">Binds 2 Zn(2+) ions per monomer.</text>
</comment>
<comment type="subunit">
    <text evidence="1">Homodimer.</text>
</comment>
<comment type="subcellular location">
    <subcellularLocation>
        <location evidence="1">Cytoplasm</location>
    </subcellularLocation>
</comment>
<comment type="domain">
    <text evidence="1">The J domain is necessary and sufficient to stimulate DnaK ATPase activity. Zinc center 1 plays an important role in the autonomous, DnaK-independent chaperone activity of DnaJ. Zinc center 2 is essential for interaction with DnaK and for DnaJ activity.</text>
</comment>
<comment type="similarity">
    <text evidence="1">Belongs to the DnaJ family.</text>
</comment>
<reference key="1">
    <citation type="submission" date="2009-06" db="EMBL/GenBank/DDBJ databases">
        <title>Complete sequence of Desulfovibrio salexigens DSM 2638.</title>
        <authorList>
            <consortium name="US DOE Joint Genome Institute"/>
            <person name="Lucas S."/>
            <person name="Copeland A."/>
            <person name="Lapidus A."/>
            <person name="Glavina del Rio T."/>
            <person name="Tice H."/>
            <person name="Bruce D."/>
            <person name="Goodwin L."/>
            <person name="Pitluck S."/>
            <person name="Munk A.C."/>
            <person name="Brettin T."/>
            <person name="Detter J.C."/>
            <person name="Han C."/>
            <person name="Tapia R."/>
            <person name="Larimer F."/>
            <person name="Land M."/>
            <person name="Hauser L."/>
            <person name="Kyrpides N."/>
            <person name="Anderson I."/>
            <person name="Wall J.D."/>
            <person name="Arkin A.P."/>
            <person name="Dehal P."/>
            <person name="Chivian D."/>
            <person name="Giles B."/>
            <person name="Hazen T.C."/>
        </authorList>
    </citation>
    <scope>NUCLEOTIDE SEQUENCE [LARGE SCALE GENOMIC DNA]</scope>
    <source>
        <strain>ATCC 14822 / DSM 2638 / NCIMB 8403 / VKM B-1763</strain>
    </source>
</reference>
<organism>
    <name type="scientific">Maridesulfovibrio salexigens (strain ATCC 14822 / DSM 2638 / NCIMB 8403 / VKM B-1763)</name>
    <name type="common">Desulfovibrio salexigens</name>
    <dbReference type="NCBI Taxonomy" id="526222"/>
    <lineage>
        <taxon>Bacteria</taxon>
        <taxon>Pseudomonadati</taxon>
        <taxon>Thermodesulfobacteriota</taxon>
        <taxon>Desulfovibrionia</taxon>
        <taxon>Desulfovibrionales</taxon>
        <taxon>Desulfovibrionaceae</taxon>
        <taxon>Maridesulfovibrio</taxon>
    </lineage>
</organism>